<proteinExistence type="inferred from homology"/>
<comment type="function">
    <text evidence="1">Catalyzes the reversible reaction in which hydroxymethyl group from 5,10-methylenetetrahydrofolate is transferred onto alpha-ketoisovalerate to form ketopantoate.</text>
</comment>
<comment type="catalytic activity">
    <reaction evidence="1">
        <text>3-methyl-2-oxobutanoate + (6R)-5,10-methylene-5,6,7,8-tetrahydrofolate + H2O = 2-dehydropantoate + (6S)-5,6,7,8-tetrahydrofolate</text>
        <dbReference type="Rhea" id="RHEA:11824"/>
        <dbReference type="ChEBI" id="CHEBI:11561"/>
        <dbReference type="ChEBI" id="CHEBI:11851"/>
        <dbReference type="ChEBI" id="CHEBI:15377"/>
        <dbReference type="ChEBI" id="CHEBI:15636"/>
        <dbReference type="ChEBI" id="CHEBI:57453"/>
        <dbReference type="EC" id="2.1.2.11"/>
    </reaction>
</comment>
<comment type="cofactor">
    <cofactor evidence="1">
        <name>Mg(2+)</name>
        <dbReference type="ChEBI" id="CHEBI:18420"/>
    </cofactor>
    <text evidence="1">Binds 1 Mg(2+) ion per subunit.</text>
</comment>
<comment type="pathway">
    <text evidence="1">Cofactor biosynthesis; (R)-pantothenate biosynthesis; (R)-pantoate from 3-methyl-2-oxobutanoate: step 1/2.</text>
</comment>
<comment type="subunit">
    <text evidence="1">Homodecamer; pentamer of dimers.</text>
</comment>
<comment type="subcellular location">
    <subcellularLocation>
        <location evidence="1">Cytoplasm</location>
    </subcellularLocation>
</comment>
<comment type="similarity">
    <text evidence="1">Belongs to the PanB family.</text>
</comment>
<evidence type="ECO:0000255" key="1">
    <source>
        <dbReference type="HAMAP-Rule" id="MF_00156"/>
    </source>
</evidence>
<name>PANB_LISMC</name>
<keyword id="KW-0963">Cytoplasm</keyword>
<keyword id="KW-0460">Magnesium</keyword>
<keyword id="KW-0479">Metal-binding</keyword>
<keyword id="KW-0566">Pantothenate biosynthesis</keyword>
<keyword id="KW-0808">Transferase</keyword>
<protein>
    <recommendedName>
        <fullName evidence="1">3-methyl-2-oxobutanoate hydroxymethyltransferase</fullName>
        <ecNumber evidence="1">2.1.2.11</ecNumber>
    </recommendedName>
    <alternativeName>
        <fullName evidence="1">Ketopantoate hydroxymethyltransferase</fullName>
        <shortName evidence="1">KPHMT</shortName>
    </alternativeName>
</protein>
<accession>C1KWK2</accession>
<reference key="1">
    <citation type="journal article" date="2012" name="BMC Genomics">
        <title>Comparative genomics and transcriptomics of lineages I, II, and III strains of Listeria monocytogenes.</title>
        <authorList>
            <person name="Hain T."/>
            <person name="Ghai R."/>
            <person name="Billion A."/>
            <person name="Kuenne C.T."/>
            <person name="Steinweg C."/>
            <person name="Izar B."/>
            <person name="Mohamed W."/>
            <person name="Mraheil M."/>
            <person name="Domann E."/>
            <person name="Schaffrath S."/>
            <person name="Karst U."/>
            <person name="Goesmann A."/>
            <person name="Oehm S."/>
            <person name="Puhler A."/>
            <person name="Merkl R."/>
            <person name="Vorwerk S."/>
            <person name="Glaser P."/>
            <person name="Garrido P."/>
            <person name="Rusniok C."/>
            <person name="Buchrieser C."/>
            <person name="Goebel W."/>
            <person name="Chakraborty T."/>
        </authorList>
    </citation>
    <scope>NUCLEOTIDE SEQUENCE [LARGE SCALE GENOMIC DNA]</scope>
    <source>
        <strain>CLIP80459</strain>
    </source>
</reference>
<organism>
    <name type="scientific">Listeria monocytogenes serotype 4b (strain CLIP80459)</name>
    <dbReference type="NCBI Taxonomy" id="568819"/>
    <lineage>
        <taxon>Bacteria</taxon>
        <taxon>Bacillati</taxon>
        <taxon>Bacillota</taxon>
        <taxon>Bacilli</taxon>
        <taxon>Bacillales</taxon>
        <taxon>Listeriaceae</taxon>
        <taxon>Listeria</taxon>
    </lineage>
</organism>
<sequence length="277" mass="29839">MKRPVDFFAMKENGEKITMITAYDYPSAKNVEQAEADMILVGDSLGMVVLGYDSTVPVTMDDMIHHTKAVKRGAPDTFVVTDMPFMTYHGSVDETIQNARKIIQESGAHAVKLEGAGEVVNKIARLTEAGAPVVAHLGLTPQSVGLTGSYKVRAKSAQEAQELMDNALAVEAAGAIALVLEAIPRQLAEKVSKALSIPTIGIGAGVETDGQVLVYHDIIGYGISRRAKFVKAYADIDERIEPALASYVKEVKAATFPEVKHSFTMAEEDLKGLYGRE</sequence>
<gene>
    <name evidence="1" type="primary">panB</name>
    <name type="ordered locus">Lm4b_01919</name>
</gene>
<dbReference type="EC" id="2.1.2.11" evidence="1"/>
<dbReference type="EMBL" id="FM242711">
    <property type="protein sequence ID" value="CAS05677.1"/>
    <property type="molecule type" value="Genomic_DNA"/>
</dbReference>
<dbReference type="RefSeq" id="WP_003726618.1">
    <property type="nucleotide sequence ID" value="NC_012488.1"/>
</dbReference>
<dbReference type="SMR" id="C1KWK2"/>
<dbReference type="KEGG" id="lmc:Lm4b_01919"/>
<dbReference type="HOGENOM" id="CLU_036645_1_0_9"/>
<dbReference type="UniPathway" id="UPA00028">
    <property type="reaction ID" value="UER00003"/>
</dbReference>
<dbReference type="GO" id="GO:0005737">
    <property type="term" value="C:cytoplasm"/>
    <property type="evidence" value="ECO:0007669"/>
    <property type="project" value="UniProtKB-SubCell"/>
</dbReference>
<dbReference type="GO" id="GO:0003864">
    <property type="term" value="F:3-methyl-2-oxobutanoate hydroxymethyltransferase activity"/>
    <property type="evidence" value="ECO:0007669"/>
    <property type="project" value="UniProtKB-UniRule"/>
</dbReference>
<dbReference type="GO" id="GO:0000287">
    <property type="term" value="F:magnesium ion binding"/>
    <property type="evidence" value="ECO:0007669"/>
    <property type="project" value="TreeGrafter"/>
</dbReference>
<dbReference type="GO" id="GO:0015940">
    <property type="term" value="P:pantothenate biosynthetic process"/>
    <property type="evidence" value="ECO:0007669"/>
    <property type="project" value="UniProtKB-UniRule"/>
</dbReference>
<dbReference type="CDD" id="cd06557">
    <property type="entry name" value="KPHMT-like"/>
    <property type="match status" value="1"/>
</dbReference>
<dbReference type="FunFam" id="3.20.20.60:FF:000003">
    <property type="entry name" value="3-methyl-2-oxobutanoate hydroxymethyltransferase"/>
    <property type="match status" value="1"/>
</dbReference>
<dbReference type="Gene3D" id="3.20.20.60">
    <property type="entry name" value="Phosphoenolpyruvate-binding domains"/>
    <property type="match status" value="1"/>
</dbReference>
<dbReference type="HAMAP" id="MF_00156">
    <property type="entry name" value="PanB"/>
    <property type="match status" value="1"/>
</dbReference>
<dbReference type="InterPro" id="IPR003700">
    <property type="entry name" value="Pantoate_hydroxy_MeTrfase"/>
</dbReference>
<dbReference type="InterPro" id="IPR015813">
    <property type="entry name" value="Pyrv/PenolPyrv_kinase-like_dom"/>
</dbReference>
<dbReference type="InterPro" id="IPR040442">
    <property type="entry name" value="Pyrv_kinase-like_dom_sf"/>
</dbReference>
<dbReference type="NCBIfam" id="TIGR00222">
    <property type="entry name" value="panB"/>
    <property type="match status" value="1"/>
</dbReference>
<dbReference type="NCBIfam" id="NF001452">
    <property type="entry name" value="PRK00311.1"/>
    <property type="match status" value="1"/>
</dbReference>
<dbReference type="PANTHER" id="PTHR20881">
    <property type="entry name" value="3-METHYL-2-OXOBUTANOATE HYDROXYMETHYLTRANSFERASE"/>
    <property type="match status" value="1"/>
</dbReference>
<dbReference type="PANTHER" id="PTHR20881:SF0">
    <property type="entry name" value="3-METHYL-2-OXOBUTANOATE HYDROXYMETHYLTRANSFERASE"/>
    <property type="match status" value="1"/>
</dbReference>
<dbReference type="Pfam" id="PF02548">
    <property type="entry name" value="Pantoate_transf"/>
    <property type="match status" value="1"/>
</dbReference>
<dbReference type="PIRSF" id="PIRSF000388">
    <property type="entry name" value="Pantoate_hydroxy_MeTrfase"/>
    <property type="match status" value="1"/>
</dbReference>
<dbReference type="SUPFAM" id="SSF51621">
    <property type="entry name" value="Phosphoenolpyruvate/pyruvate domain"/>
    <property type="match status" value="1"/>
</dbReference>
<feature type="chain" id="PRO_1000203475" description="3-methyl-2-oxobutanoate hydroxymethyltransferase">
    <location>
        <begin position="1"/>
        <end position="277"/>
    </location>
</feature>
<feature type="active site" description="Proton acceptor" evidence="1">
    <location>
        <position position="181"/>
    </location>
</feature>
<feature type="binding site" evidence="1">
    <location>
        <begin position="43"/>
        <end position="44"/>
    </location>
    <ligand>
        <name>3-methyl-2-oxobutanoate</name>
        <dbReference type="ChEBI" id="CHEBI:11851"/>
    </ligand>
</feature>
<feature type="binding site" evidence="1">
    <location>
        <position position="43"/>
    </location>
    <ligand>
        <name>Mg(2+)</name>
        <dbReference type="ChEBI" id="CHEBI:18420"/>
    </ligand>
</feature>
<feature type="binding site" evidence="1">
    <location>
        <position position="82"/>
    </location>
    <ligand>
        <name>3-methyl-2-oxobutanoate</name>
        <dbReference type="ChEBI" id="CHEBI:11851"/>
    </ligand>
</feature>
<feature type="binding site" evidence="1">
    <location>
        <position position="82"/>
    </location>
    <ligand>
        <name>Mg(2+)</name>
        <dbReference type="ChEBI" id="CHEBI:18420"/>
    </ligand>
</feature>
<feature type="binding site" evidence="1">
    <location>
        <position position="112"/>
    </location>
    <ligand>
        <name>3-methyl-2-oxobutanoate</name>
        <dbReference type="ChEBI" id="CHEBI:11851"/>
    </ligand>
</feature>
<feature type="binding site" evidence="1">
    <location>
        <position position="114"/>
    </location>
    <ligand>
        <name>Mg(2+)</name>
        <dbReference type="ChEBI" id="CHEBI:18420"/>
    </ligand>
</feature>